<reference key="1">
    <citation type="journal article" date="2004" name="Genome Res.">
        <title>The complete genome and proteome of Mycoplasma mobile.</title>
        <authorList>
            <person name="Jaffe J.D."/>
            <person name="Stange-Thomann N."/>
            <person name="Smith C."/>
            <person name="DeCaprio D."/>
            <person name="Fisher S."/>
            <person name="Butler J."/>
            <person name="Calvo S."/>
            <person name="Elkins T."/>
            <person name="FitzGerald M.G."/>
            <person name="Hafez N."/>
            <person name="Kodira C.D."/>
            <person name="Major J."/>
            <person name="Wang S."/>
            <person name="Wilkinson J."/>
            <person name="Nicol R."/>
            <person name="Nusbaum C."/>
            <person name="Birren B."/>
            <person name="Berg H.C."/>
            <person name="Church G.M."/>
        </authorList>
    </citation>
    <scope>NUCLEOTIDE SEQUENCE [LARGE SCALE GENOMIC DNA]</scope>
    <source>
        <strain>ATCC 43663 / NCTC 11711 / 163 K</strain>
    </source>
</reference>
<proteinExistence type="inferred from homology"/>
<dbReference type="EC" id="3.1.-.-" evidence="1"/>
<dbReference type="EMBL" id="AE017308">
    <property type="protein sequence ID" value="AAT27924.1"/>
    <property type="molecule type" value="Genomic_DNA"/>
</dbReference>
<dbReference type="RefSeq" id="WP_011264958.1">
    <property type="nucleotide sequence ID" value="NC_006908.1"/>
</dbReference>
<dbReference type="SMR" id="Q6KHK6"/>
<dbReference type="STRING" id="267748.MMOB4380"/>
<dbReference type="KEGG" id="mmo:MMOB4380"/>
<dbReference type="eggNOG" id="COG0816">
    <property type="taxonomic scope" value="Bacteria"/>
</dbReference>
<dbReference type="HOGENOM" id="CLU_098240_2_2_14"/>
<dbReference type="OrthoDB" id="9796140at2"/>
<dbReference type="Proteomes" id="UP000009072">
    <property type="component" value="Chromosome"/>
</dbReference>
<dbReference type="GO" id="GO:0005829">
    <property type="term" value="C:cytosol"/>
    <property type="evidence" value="ECO:0007669"/>
    <property type="project" value="TreeGrafter"/>
</dbReference>
<dbReference type="GO" id="GO:0004518">
    <property type="term" value="F:nuclease activity"/>
    <property type="evidence" value="ECO:0007669"/>
    <property type="project" value="UniProtKB-KW"/>
</dbReference>
<dbReference type="GO" id="GO:0000967">
    <property type="term" value="P:rRNA 5'-end processing"/>
    <property type="evidence" value="ECO:0007669"/>
    <property type="project" value="UniProtKB-UniRule"/>
</dbReference>
<dbReference type="CDD" id="cd16964">
    <property type="entry name" value="YqgF"/>
    <property type="match status" value="1"/>
</dbReference>
<dbReference type="Gene3D" id="3.30.420.140">
    <property type="entry name" value="YqgF/RNase H-like domain"/>
    <property type="match status" value="1"/>
</dbReference>
<dbReference type="HAMAP" id="MF_00651">
    <property type="entry name" value="Nuclease_YqgF"/>
    <property type="match status" value="1"/>
</dbReference>
<dbReference type="InterPro" id="IPR012337">
    <property type="entry name" value="RNaseH-like_sf"/>
</dbReference>
<dbReference type="InterPro" id="IPR005227">
    <property type="entry name" value="YqgF"/>
</dbReference>
<dbReference type="InterPro" id="IPR006641">
    <property type="entry name" value="YqgF/RNaseH-like_dom"/>
</dbReference>
<dbReference type="InterPro" id="IPR037027">
    <property type="entry name" value="YqgF/RNaseH-like_dom_sf"/>
</dbReference>
<dbReference type="NCBIfam" id="TIGR00250">
    <property type="entry name" value="RNAse_H_YqgF"/>
    <property type="match status" value="1"/>
</dbReference>
<dbReference type="PANTHER" id="PTHR33317">
    <property type="entry name" value="POLYNUCLEOTIDYL TRANSFERASE, RIBONUCLEASE H-LIKE SUPERFAMILY PROTEIN"/>
    <property type="match status" value="1"/>
</dbReference>
<dbReference type="PANTHER" id="PTHR33317:SF4">
    <property type="entry name" value="POLYNUCLEOTIDYL TRANSFERASE, RIBONUCLEASE H-LIKE SUPERFAMILY PROTEIN"/>
    <property type="match status" value="1"/>
</dbReference>
<dbReference type="Pfam" id="PF03652">
    <property type="entry name" value="RuvX"/>
    <property type="match status" value="1"/>
</dbReference>
<dbReference type="SMART" id="SM00732">
    <property type="entry name" value="YqgFc"/>
    <property type="match status" value="1"/>
</dbReference>
<dbReference type="SUPFAM" id="SSF53098">
    <property type="entry name" value="Ribonuclease H-like"/>
    <property type="match status" value="1"/>
</dbReference>
<protein>
    <recommendedName>
        <fullName evidence="1">Putative pre-16S rRNA nuclease</fullName>
        <ecNumber evidence="1">3.1.-.-</ecNumber>
    </recommendedName>
</protein>
<keyword id="KW-0963">Cytoplasm</keyword>
<keyword id="KW-0378">Hydrolase</keyword>
<keyword id="KW-0540">Nuclease</keyword>
<keyword id="KW-1185">Reference proteome</keyword>
<keyword id="KW-0690">Ribosome biogenesis</keyword>
<organism>
    <name type="scientific">Mycoplasma mobile (strain ATCC 43663 / 163K / NCTC 11711)</name>
    <name type="common">Mesomycoplasma mobile</name>
    <dbReference type="NCBI Taxonomy" id="267748"/>
    <lineage>
        <taxon>Bacteria</taxon>
        <taxon>Bacillati</taxon>
        <taxon>Mycoplasmatota</taxon>
        <taxon>Mycoplasmoidales</taxon>
        <taxon>Metamycoplasmataceae</taxon>
        <taxon>Mesomycoplasma</taxon>
    </lineage>
</organism>
<evidence type="ECO:0000255" key="1">
    <source>
        <dbReference type="HAMAP-Rule" id="MF_00651"/>
    </source>
</evidence>
<accession>Q6KHK6</accession>
<sequence>MRKLGIDLGKIRTGFAISDDSNKISLPLKTFIQKNANFNNIILEIKKILLEYQIDTIVIGLPIKINNEKTKSTIFVENFKKHLEKEINLPIFFVNEYNSSVLANLSINEMKSKKRKTIVDKISAQIILNDFLNNYFIKEKYDEN</sequence>
<comment type="function">
    <text evidence="1">Could be a nuclease involved in processing of the 5'-end of pre-16S rRNA.</text>
</comment>
<comment type="subcellular location">
    <subcellularLocation>
        <location evidence="1">Cytoplasm</location>
    </subcellularLocation>
</comment>
<comment type="similarity">
    <text evidence="1">Belongs to the YqgF nuclease family.</text>
</comment>
<name>YQGF_MYCM1</name>
<gene>
    <name type="ordered locus">MMOB4380</name>
</gene>
<feature type="chain" id="PRO_0000172094" description="Putative pre-16S rRNA nuclease">
    <location>
        <begin position="1"/>
        <end position="144"/>
    </location>
</feature>